<reference key="1">
    <citation type="submission" date="2005-03" db="EMBL/GenBank/DDBJ databases">
        <title>Brevibacillus brevis strain 47, complete genome.</title>
        <authorList>
            <person name="Hosoyama A."/>
            <person name="Yamada R."/>
            <person name="Hongo Y."/>
            <person name="Terui Y."/>
            <person name="Ankai A."/>
            <person name="Masuyama W."/>
            <person name="Sekiguchi M."/>
            <person name="Takeda T."/>
            <person name="Asano K."/>
            <person name="Ohji S."/>
            <person name="Ichikawa N."/>
            <person name="Narita S."/>
            <person name="Aoki N."/>
            <person name="Miura H."/>
            <person name="Matsushita S."/>
            <person name="Sekigawa T."/>
            <person name="Yamagata H."/>
            <person name="Yoshikawa H."/>
            <person name="Udaka S."/>
            <person name="Tanikawa S."/>
            <person name="Fujita N."/>
        </authorList>
    </citation>
    <scope>NUCLEOTIDE SEQUENCE [LARGE SCALE GENOMIC DNA]</scope>
    <source>
        <strain>47 / JCM 6285 / NBRC 100599</strain>
    </source>
</reference>
<sequence length="231" mass="24866">MIDYRGWRHTFKLDPDKTIDDEALEAICESGTDAIIVGGTYGVTYDNTLELMSRLRRYAVPAVLEISSLDAVVPGFDSYLIPLVLNAGDPDWIFAPHVSGLQAFGAYIHWDEIITEGYIIANPEAGVAQLTKARPIADATQAKAYAQVATNICRLPIVYMEYSGTYGDPTIVKAAKTGAGEAHLFYGGGIRNPEQAAEMAAIADTVVVGNVIYDDLDAALATVKAVKGTQY</sequence>
<feature type="chain" id="PRO_1000202938" description="Heptaprenylglyceryl phosphate synthase">
    <location>
        <begin position="1"/>
        <end position="231"/>
    </location>
</feature>
<feature type="binding site" evidence="1">
    <location>
        <position position="12"/>
    </location>
    <ligand>
        <name>sn-glycerol 1-phosphate</name>
        <dbReference type="ChEBI" id="CHEBI:57685"/>
    </ligand>
</feature>
<feature type="binding site" evidence="1">
    <location>
        <position position="14"/>
    </location>
    <ligand>
        <name>Mg(2+)</name>
        <dbReference type="ChEBI" id="CHEBI:18420"/>
    </ligand>
</feature>
<feature type="binding site" evidence="1">
    <location>
        <position position="40"/>
    </location>
    <ligand>
        <name>Mg(2+)</name>
        <dbReference type="ChEBI" id="CHEBI:18420"/>
    </ligand>
</feature>
<feature type="binding site" evidence="1">
    <location>
        <begin position="159"/>
        <end position="164"/>
    </location>
    <ligand>
        <name>sn-glycerol 1-phosphate</name>
        <dbReference type="ChEBI" id="CHEBI:57685"/>
    </ligand>
</feature>
<feature type="binding site" evidence="1">
    <location>
        <position position="189"/>
    </location>
    <ligand>
        <name>sn-glycerol 1-phosphate</name>
        <dbReference type="ChEBI" id="CHEBI:57685"/>
    </ligand>
</feature>
<feature type="binding site" evidence="1">
    <location>
        <begin position="209"/>
        <end position="210"/>
    </location>
    <ligand>
        <name>sn-glycerol 1-phosphate</name>
        <dbReference type="ChEBI" id="CHEBI:57685"/>
    </ligand>
</feature>
<proteinExistence type="inferred from homology"/>
<name>PCRB_BREBN</name>
<organism>
    <name type="scientific">Brevibacillus brevis (strain 47 / JCM 6285 / NBRC 100599)</name>
    <dbReference type="NCBI Taxonomy" id="358681"/>
    <lineage>
        <taxon>Bacteria</taxon>
        <taxon>Bacillati</taxon>
        <taxon>Bacillota</taxon>
        <taxon>Bacilli</taxon>
        <taxon>Bacillales</taxon>
        <taxon>Paenibacillaceae</taxon>
        <taxon>Brevibacillus</taxon>
    </lineage>
</organism>
<evidence type="ECO:0000255" key="1">
    <source>
        <dbReference type="HAMAP-Rule" id="MF_00112"/>
    </source>
</evidence>
<keyword id="KW-0444">Lipid biosynthesis</keyword>
<keyword id="KW-0443">Lipid metabolism</keyword>
<keyword id="KW-0460">Magnesium</keyword>
<keyword id="KW-0479">Metal-binding</keyword>
<keyword id="KW-0594">Phospholipid biosynthesis</keyword>
<keyword id="KW-1208">Phospholipid metabolism</keyword>
<keyword id="KW-1185">Reference proteome</keyword>
<keyword id="KW-0808">Transferase</keyword>
<dbReference type="EC" id="2.5.1.n9" evidence="1"/>
<dbReference type="EMBL" id="AP008955">
    <property type="protein sequence ID" value="BAH41647.1"/>
    <property type="molecule type" value="Genomic_DNA"/>
</dbReference>
<dbReference type="RefSeq" id="WP_012684411.1">
    <property type="nucleotide sequence ID" value="NC_012491.1"/>
</dbReference>
<dbReference type="SMR" id="C0Z4C0"/>
<dbReference type="STRING" id="358681.BBR47_06700"/>
<dbReference type="KEGG" id="bbe:BBR47_06700"/>
<dbReference type="eggNOG" id="COG1646">
    <property type="taxonomic scope" value="Bacteria"/>
</dbReference>
<dbReference type="HOGENOM" id="CLU_095211_0_0_9"/>
<dbReference type="UniPathway" id="UPA00940"/>
<dbReference type="Proteomes" id="UP000001877">
    <property type="component" value="Chromosome"/>
</dbReference>
<dbReference type="GO" id="GO:0120536">
    <property type="term" value="F:heptaprenylglyceryl phosphate synthase activity"/>
    <property type="evidence" value="ECO:0007669"/>
    <property type="project" value="RHEA"/>
</dbReference>
<dbReference type="GO" id="GO:0000287">
    <property type="term" value="F:magnesium ion binding"/>
    <property type="evidence" value="ECO:0007669"/>
    <property type="project" value="UniProtKB-UniRule"/>
</dbReference>
<dbReference type="GO" id="GO:0046474">
    <property type="term" value="P:glycerophospholipid biosynthetic process"/>
    <property type="evidence" value="ECO:0007669"/>
    <property type="project" value="UniProtKB-UniRule"/>
</dbReference>
<dbReference type="CDD" id="cd02812">
    <property type="entry name" value="PcrB_like"/>
    <property type="match status" value="1"/>
</dbReference>
<dbReference type="FunFam" id="3.20.20.390:FF:000001">
    <property type="entry name" value="Heptaprenylglyceryl phosphate synthase"/>
    <property type="match status" value="1"/>
</dbReference>
<dbReference type="Gene3D" id="3.20.20.390">
    <property type="entry name" value="FMN-linked oxidoreductases"/>
    <property type="match status" value="1"/>
</dbReference>
<dbReference type="HAMAP" id="MF_00112">
    <property type="entry name" value="GGGP_HepGP_synthase"/>
    <property type="match status" value="1"/>
</dbReference>
<dbReference type="InterPro" id="IPR039074">
    <property type="entry name" value="GGGP/HepGP_synthase_I"/>
</dbReference>
<dbReference type="InterPro" id="IPR038597">
    <property type="entry name" value="GGGP/HepGP_synthase_sf"/>
</dbReference>
<dbReference type="InterPro" id="IPR008205">
    <property type="entry name" value="GGGP_HepGP_synthase"/>
</dbReference>
<dbReference type="NCBIfam" id="TIGR01768">
    <property type="entry name" value="GGGP-family"/>
    <property type="match status" value="1"/>
</dbReference>
<dbReference type="NCBIfam" id="NF003197">
    <property type="entry name" value="PRK04169.1-1"/>
    <property type="match status" value="1"/>
</dbReference>
<dbReference type="NCBIfam" id="NF003199">
    <property type="entry name" value="PRK04169.1-3"/>
    <property type="match status" value="1"/>
</dbReference>
<dbReference type="PANTHER" id="PTHR40029">
    <property type="match status" value="1"/>
</dbReference>
<dbReference type="PANTHER" id="PTHR40029:SF2">
    <property type="entry name" value="HEPTAPRENYLGLYCERYL PHOSPHATE SYNTHASE"/>
    <property type="match status" value="1"/>
</dbReference>
<dbReference type="Pfam" id="PF01884">
    <property type="entry name" value="PcrB"/>
    <property type="match status" value="1"/>
</dbReference>
<dbReference type="SUPFAM" id="SSF51395">
    <property type="entry name" value="FMN-linked oxidoreductases"/>
    <property type="match status" value="1"/>
</dbReference>
<gene>
    <name evidence="1" type="primary">pcrB</name>
    <name type="ordered locus">BBR47_06700</name>
</gene>
<protein>
    <recommendedName>
        <fullName evidence="1">Heptaprenylglyceryl phosphate synthase</fullName>
        <shortName evidence="1">HepGP synthase</shortName>
        <ecNumber evidence="1">2.5.1.n9</ecNumber>
    </recommendedName>
    <alternativeName>
        <fullName evidence="1">Glycerol-1-phosphate heptaprenyltransferase</fullName>
    </alternativeName>
</protein>
<accession>C0Z4C0</accession>
<comment type="function">
    <text evidence="1">Prenyltransferase that catalyzes in vivo the transfer of the heptaprenyl moiety of heptaprenyl pyrophosphate (HepPP; 35 carbon atoms) to the C3 hydroxyl of sn-glycerol-1-phosphate (G1P), producing heptaprenylglyceryl phosphate (HepGP). This reaction is an ether-bond-formation step in the biosynthesis of archaea-type G1P-based membrane lipids found in Bacillales.</text>
</comment>
<comment type="catalytic activity">
    <reaction evidence="1">
        <text>sn-glycerol 1-phosphate + all-trans-heptaprenyl diphosphate = 3-heptaprenyl-sn-glycero-1-phosphate + diphosphate</text>
        <dbReference type="Rhea" id="RHEA:33495"/>
        <dbReference type="ChEBI" id="CHEBI:33019"/>
        <dbReference type="ChEBI" id="CHEBI:57685"/>
        <dbReference type="ChEBI" id="CHEBI:58206"/>
        <dbReference type="ChEBI" id="CHEBI:64781"/>
        <dbReference type="EC" id="2.5.1.n9"/>
    </reaction>
</comment>
<comment type="cofactor">
    <cofactor evidence="1">
        <name>Mg(2+)</name>
        <dbReference type="ChEBI" id="CHEBI:18420"/>
    </cofactor>
</comment>
<comment type="pathway">
    <text evidence="1">Membrane lipid metabolism; glycerophospholipid metabolism.</text>
</comment>
<comment type="subunit">
    <text evidence="1">Homodimer.</text>
</comment>
<comment type="similarity">
    <text evidence="1">Belongs to the GGGP/HepGP synthase family. Group I subfamily.</text>
</comment>